<keyword id="KW-1003">Cell membrane</keyword>
<keyword id="KW-0966">Cell projection</keyword>
<keyword id="KW-1015">Disulfide bond</keyword>
<keyword id="KW-0325">Glycoprotein</keyword>
<keyword id="KW-0407">Ion channel</keyword>
<keyword id="KW-0406">Ion transport</keyword>
<keyword id="KW-0472">Membrane</keyword>
<keyword id="KW-0628">Postsynaptic cell membrane</keyword>
<keyword id="KW-1185">Reference proteome</keyword>
<keyword id="KW-0915">Sodium</keyword>
<keyword id="KW-0894">Sodium channel</keyword>
<keyword id="KW-0739">Sodium transport</keyword>
<keyword id="KW-0770">Synapse</keyword>
<keyword id="KW-0812">Transmembrane</keyword>
<keyword id="KW-1133">Transmembrane helix</keyword>
<keyword id="KW-0813">Transport</keyword>
<reference key="1">
    <citation type="journal article" date="2004" name="J. Biol. Chem.">
        <title>A family of acid-sensing ion channels (ASICs) from the zebrafish: widespread expression in the central nervous system suggests a conserved role in neuronal communication.</title>
        <authorList>
            <person name="Paukert M."/>
            <person name="Sidi S."/>
            <person name="Russell C."/>
            <person name="Siba M."/>
            <person name="Wilson S.W."/>
            <person name="Nicolson T."/>
            <person name="Gruender S."/>
        </authorList>
    </citation>
    <scope>NUCLEOTIDE SEQUENCE [MRNA]</scope>
    <scope>FUNCTION</scope>
    <scope>TRANSPORTER ACTIVITY</scope>
    <scope>ACTIVITY REGULATION</scope>
    <scope>INTERACTION WITH ASIC1A</scope>
    <scope>SUBCELLULAR LOCATION</scope>
    <scope>TISSUE SPECIFICITY</scope>
    <scope>DEVELOPMENTAL STAGE</scope>
</reference>
<evidence type="ECO:0000250" key="1">
    <source>
        <dbReference type="UniProtKB" id="P78348"/>
    </source>
</evidence>
<evidence type="ECO:0000250" key="2">
    <source>
        <dbReference type="UniProtKB" id="Q1XA76"/>
    </source>
</evidence>
<evidence type="ECO:0000250" key="3">
    <source>
        <dbReference type="UniProtKB" id="Q6NXK8"/>
    </source>
</evidence>
<evidence type="ECO:0000255" key="4"/>
<evidence type="ECO:0000269" key="5">
    <source>
    </source>
</evidence>
<evidence type="ECO:0000303" key="6">
    <source>
    </source>
</evidence>
<evidence type="ECO:0000305" key="7"/>
<evidence type="ECO:0000305" key="8">
    <source>
    </source>
</evidence>
<feature type="chain" id="PRO_0000181298" description="Acid-sensing ion channel 1C">
    <location>
        <begin position="1"/>
        <end position="529"/>
    </location>
</feature>
<feature type="topological domain" description="Cytoplasmic" evidence="1">
    <location>
        <begin position="1"/>
        <end position="51"/>
    </location>
</feature>
<feature type="transmembrane region" description="Helical" evidence="1">
    <location>
        <begin position="52"/>
        <end position="68"/>
    </location>
</feature>
<feature type="topological domain" description="Extracellular" evidence="1">
    <location>
        <begin position="69"/>
        <end position="427"/>
    </location>
</feature>
<feature type="transmembrane region" description="Discontinuously helical" evidence="1">
    <location>
        <begin position="428"/>
        <end position="458"/>
    </location>
</feature>
<feature type="topological domain" description="Cytoplasmic" evidence="1">
    <location>
        <begin position="459"/>
        <end position="529"/>
    </location>
</feature>
<feature type="short sequence motif" description="GAS motif; ion selectivity filter" evidence="2">
    <location>
        <begin position="444"/>
        <end position="446"/>
    </location>
</feature>
<feature type="site" description="Involved in channel desensitization; the process by which the channel becomes unresponsive to proton stimulation" evidence="2">
    <location>
        <position position="81"/>
    </location>
</feature>
<feature type="site" description="Involved in proton-dependent gating" evidence="1">
    <location>
        <position position="357"/>
    </location>
</feature>
<feature type="glycosylation site" description="N-linked (GlcNAc...) asparagine" evidence="4">
    <location>
        <position position="86"/>
    </location>
</feature>
<feature type="glycosylation site" description="N-linked (GlcNAc...) asparagine" evidence="4">
    <location>
        <position position="155"/>
    </location>
</feature>
<feature type="glycosylation site" description="N-linked (GlcNAc...) asparagine" evidence="4">
    <location>
        <position position="161"/>
    </location>
</feature>
<feature type="glycosylation site" description="N-linked (GlcNAc...) asparagine" evidence="4">
    <location>
        <position position="185"/>
    </location>
</feature>
<feature type="glycosylation site" description="N-linked (GlcNAc...) asparagine" evidence="4">
    <location>
        <position position="368"/>
    </location>
</feature>
<feature type="glycosylation site" description="N-linked (GlcNAc...) asparagine" evidence="4">
    <location>
        <position position="395"/>
    </location>
</feature>
<feature type="disulfide bond" evidence="2">
    <location>
        <begin position="95"/>
        <end position="196"/>
    </location>
</feature>
<feature type="disulfide bond" evidence="2">
    <location>
        <begin position="174"/>
        <end position="181"/>
    </location>
</feature>
<feature type="disulfide bond" evidence="2">
    <location>
        <begin position="292"/>
        <end position="367"/>
    </location>
</feature>
<feature type="disulfide bond" evidence="2">
    <location>
        <begin position="310"/>
        <end position="363"/>
    </location>
</feature>
<feature type="disulfide bond" evidence="2">
    <location>
        <begin position="314"/>
        <end position="361"/>
    </location>
</feature>
<feature type="disulfide bond" evidence="2">
    <location>
        <begin position="323"/>
        <end position="345"/>
    </location>
</feature>
<feature type="disulfide bond" evidence="2">
    <location>
        <begin position="325"/>
        <end position="337"/>
    </location>
</feature>
<accession>Q708S6</accession>
<proteinExistence type="evidence at protein level"/>
<organism>
    <name type="scientific">Danio rerio</name>
    <name type="common">Zebrafish</name>
    <name type="synonym">Brachydanio rerio</name>
    <dbReference type="NCBI Taxonomy" id="7955"/>
    <lineage>
        <taxon>Eukaryota</taxon>
        <taxon>Metazoa</taxon>
        <taxon>Chordata</taxon>
        <taxon>Craniata</taxon>
        <taxon>Vertebrata</taxon>
        <taxon>Euteleostomi</taxon>
        <taxon>Actinopterygii</taxon>
        <taxon>Neopterygii</taxon>
        <taxon>Teleostei</taxon>
        <taxon>Ostariophysi</taxon>
        <taxon>Cypriniformes</taxon>
        <taxon>Danionidae</taxon>
        <taxon>Danioninae</taxon>
        <taxon>Danio</taxon>
    </lineage>
</organism>
<name>ASI1C_DANRE</name>
<gene>
    <name evidence="6" type="primary">asic1c</name>
</gene>
<comment type="function">
    <text evidence="1 5">Forms voltage-independent, pH-gated trimeric sodium channels that act as postsynaptic excitatory receptors in the nervous system, playing a crucial role in regulating synaptic plasticity, learning, and memory (PubMed:14970195). Upon extracellular pH drop this channel elicits transient, fast activating, and completely desensitizing inward currents (PubMed:14970195). Displays high selectivity for sodium ions but can also permit the permeation of other cations (By similarity).</text>
</comment>
<comment type="catalytic activity">
    <reaction evidence="5">
        <text>Na(+)(in) = Na(+)(out)</text>
        <dbReference type="Rhea" id="RHEA:34963"/>
        <dbReference type="ChEBI" id="CHEBI:29101"/>
    </reaction>
</comment>
<comment type="catalytic activity">
    <reaction evidence="1">
        <text>K(+)(in) = K(+)(out)</text>
        <dbReference type="Rhea" id="RHEA:29463"/>
        <dbReference type="ChEBI" id="CHEBI:29103"/>
    </reaction>
</comment>
<comment type="catalytic activity">
    <reaction evidence="1">
        <text>Li(+)(in) = Li(+)(out)</text>
        <dbReference type="Rhea" id="RHEA:78551"/>
        <dbReference type="ChEBI" id="CHEBI:49713"/>
    </reaction>
</comment>
<comment type="catalytic activity">
    <reaction evidence="1">
        <text>Ca(2+)(in) = Ca(2+)(out)</text>
        <dbReference type="Rhea" id="RHEA:29671"/>
        <dbReference type="ChEBI" id="CHEBI:29108"/>
    </reaction>
</comment>
<comment type="activity regulation">
    <text evidence="5">Inhibited by the diuretic drug amiloride.</text>
</comment>
<comment type="subunit">
    <text evidence="5 8">Homotrimer (Probable). Heterotrimer; with other ASIC proteins producing channel with different properties (Probable). Interacts with asic1a (PubMed:14970195).</text>
</comment>
<comment type="subcellular location">
    <subcellularLocation>
        <location evidence="5">Cell membrane</location>
        <topology evidence="2">Multi-pass membrane protein</topology>
    </subcellularLocation>
    <subcellularLocation>
        <location evidence="8">Postsynaptic cell membrane</location>
    </subcellularLocation>
    <subcellularLocation>
        <location evidence="3">Cell projection</location>
        <location evidence="3">Dendrite</location>
    </subcellularLocation>
</comment>
<comment type="tissue specificity">
    <text evidence="5">Expressed in central nervous system.</text>
</comment>
<comment type="developmental stage">
    <text evidence="5">Expressed 30 hours post-fertilization (hpf) in the anterior and posterior lateral line ganglia where it persisted until at least 48 hpf. Also expressed between 30 and 72 hpf in the telencephalon. Expressed in the ventral thalamus, ventral midbrain, ventral cerebellum, and ventral hindbrain from 30 hpf. By 48 hpf, expressed also in the dorsal thalamus and hypothalamus. At 72 hpf, weak expression was apparent in the habenulae.</text>
</comment>
<comment type="domain">
    <text evidence="2">The second transmembrane domain (TM2) is a discontinuous alpha-helix disrupted by the GAS motif, which forms the selectivity filter by adopting an extended, belt-like conformation aligned approximately parallel to the membrane plane. This peptide belt encircles the waist of the channel and divides TM2 into two discontinuous helical segments. The distal helical segment of TM2 interacts with the cytoplasmic portion of the first transmembrane domain (TM1) from a neighboring subunit, contributing to the structural and functional integrity of the channel.</text>
</comment>
<comment type="similarity">
    <text evidence="7">Belongs to the amiloride-sensitive sodium channel (TC 1.A.6) family. ASIC1 subfamily.</text>
</comment>
<protein>
    <recommendedName>
        <fullName evidence="8">Acid-sensing ion channel 1C</fullName>
        <shortName evidence="8">ASIC1-C</shortName>
    </recommendedName>
    <alternativeName>
        <fullName>Acid-sensing ion channel 1.3-C</fullName>
    </alternativeName>
    <alternativeName>
        <fullName>Amiloride-sensitive cation channel 2-C, neuronal-C</fullName>
    </alternativeName>
    <alternativeName>
        <fullName evidence="6">ZASIC1.3</fullName>
    </alternativeName>
</protein>
<sequence length="529" mass="60035">MTAMKGDSEDSIESMRPSNLQVFANNSTLHGMSHIFAYGHMTFRRFLWTLSFMGSLGLLMYVCMDRVYYYFEFPHVTKLDEVAAPNLTFPAVTFCNLNEFRFSKITKNDLYHVGELLALLNENYQIANPHLADPEVLTLLKEKASFNGFKPKQFNMTDFYNRTGHDINEMLLQCSFRGEECFPLNFTTIYTRYGKCYTFNSGLDGNPLLTTLKGGTGNGLEIMLDIQQDEYLPVWGDTDETSYEAGIKVQIHSQDEPPFIDQLGFGVAPGFQTFVSCQQQLLLYLPPPWGDCRSAPMDSEYFSTYSITACRIDCETRYLLENCNCRMVHMPGTSTVCTPEQYKDCADPALDFLVEKDNDYCVCDTPCNMTRYGKELSMVKIPSKASAKYLAKKFNKTEQYITDNILVLDIFFEALNYEKIEQKKAYEVAGLLGDIGGQMGLFIGASVLTILEIFDYLYEVLKDKILGSVLRKRRPHRSASDNLVIVSLHDFKISSVFLLASYMCFVCYIVLLNAACVYLPFVVGSNSGK</sequence>
<dbReference type="EMBL" id="AJ609617">
    <property type="protein sequence ID" value="CAE81920.1"/>
    <property type="molecule type" value="mRNA"/>
</dbReference>
<dbReference type="RefSeq" id="NP_999954.1">
    <property type="nucleotide sequence ID" value="NM_214789.1"/>
</dbReference>
<dbReference type="SMR" id="Q708S6"/>
<dbReference type="FunCoup" id="Q708S6">
    <property type="interactions" value="269"/>
</dbReference>
<dbReference type="STRING" id="7955.ENSDARP00000130223"/>
<dbReference type="GlyCosmos" id="Q708S6">
    <property type="glycosylation" value="6 sites, No reported glycans"/>
</dbReference>
<dbReference type="Ensembl" id="ENSDART00000169227">
    <property type="protein sequence ID" value="ENSDARP00000130223"/>
    <property type="gene ID" value="ENSDARG00000098428"/>
</dbReference>
<dbReference type="GeneID" id="407670"/>
<dbReference type="KEGG" id="dre:407670"/>
<dbReference type="AGR" id="ZFIN:ZDB-GENE-040513-3"/>
<dbReference type="CTD" id="407670"/>
<dbReference type="ZFIN" id="ZDB-GENE-040513-3">
    <property type="gene designation" value="asic1c"/>
</dbReference>
<dbReference type="HOGENOM" id="CLU_020415_1_2_1"/>
<dbReference type="InParanoid" id="Q708S6"/>
<dbReference type="OMA" id="PGNANIC"/>
<dbReference type="OrthoDB" id="6021021at2759"/>
<dbReference type="PhylomeDB" id="Q708S6"/>
<dbReference type="Reactome" id="R-DRE-2672351">
    <property type="pathway name" value="Stimuli-sensing channels"/>
</dbReference>
<dbReference type="PRO" id="PR:Q708S6"/>
<dbReference type="Proteomes" id="UP000000437">
    <property type="component" value="Chromosome 24"/>
</dbReference>
<dbReference type="Bgee" id="ENSDARG00000098428">
    <property type="expression patterns" value="Expressed in ovary and 6 other cell types or tissues"/>
</dbReference>
<dbReference type="ExpressionAtlas" id="Q708S6">
    <property type="expression patterns" value="baseline"/>
</dbReference>
<dbReference type="GO" id="GO:0030425">
    <property type="term" value="C:dendrite"/>
    <property type="evidence" value="ECO:0007669"/>
    <property type="project" value="UniProtKB-SubCell"/>
</dbReference>
<dbReference type="GO" id="GO:0005886">
    <property type="term" value="C:plasma membrane"/>
    <property type="evidence" value="ECO:0000314"/>
    <property type="project" value="ZFIN"/>
</dbReference>
<dbReference type="GO" id="GO:0045211">
    <property type="term" value="C:postsynaptic membrane"/>
    <property type="evidence" value="ECO:0007669"/>
    <property type="project" value="UniProtKB-SubCell"/>
</dbReference>
<dbReference type="GO" id="GO:0015280">
    <property type="term" value="F:ligand-gated sodium channel activity"/>
    <property type="evidence" value="ECO:0000314"/>
    <property type="project" value="ZFIN"/>
</dbReference>
<dbReference type="GO" id="GO:0005261">
    <property type="term" value="F:monoatomic cation channel activity"/>
    <property type="evidence" value="ECO:0000316"/>
    <property type="project" value="ZFIN"/>
</dbReference>
<dbReference type="GO" id="GO:0160128">
    <property type="term" value="F:pH-gated monoatomic ion channel activity"/>
    <property type="evidence" value="ECO:0000250"/>
    <property type="project" value="UniProtKB"/>
</dbReference>
<dbReference type="GO" id="GO:0071467">
    <property type="term" value="P:cellular response to pH"/>
    <property type="evidence" value="ECO:0000250"/>
    <property type="project" value="UniProtKB"/>
</dbReference>
<dbReference type="GO" id="GO:0035725">
    <property type="term" value="P:sodium ion transmembrane transport"/>
    <property type="evidence" value="ECO:0000318"/>
    <property type="project" value="GO_Central"/>
</dbReference>
<dbReference type="FunFam" id="1.10.287.820:FF:000001">
    <property type="entry name" value="acid-sensing ion channel 1 isoform X2"/>
    <property type="match status" value="1"/>
</dbReference>
<dbReference type="FunFam" id="1.10.3590.10:FF:000002">
    <property type="entry name" value="acid-sensing ion channel 1 isoform X2"/>
    <property type="match status" value="1"/>
</dbReference>
<dbReference type="FunFam" id="1.10.287.770:FF:000001">
    <property type="entry name" value="Acid-sensing ion channel subunit 1"/>
    <property type="match status" value="1"/>
</dbReference>
<dbReference type="Gene3D" id="1.10.3590.10">
    <property type="entry name" value="acid-sensing ion channel 1 domain"/>
    <property type="match status" value="2"/>
</dbReference>
<dbReference type="Gene3D" id="1.10.287.820">
    <property type="entry name" value="Acid-sensing ion channel domain"/>
    <property type="match status" value="1"/>
</dbReference>
<dbReference type="Gene3D" id="1.10.287.770">
    <property type="entry name" value="YojJ-like"/>
    <property type="match status" value="2"/>
</dbReference>
<dbReference type="InterPro" id="IPR001873">
    <property type="entry name" value="ENaC"/>
</dbReference>
<dbReference type="InterPro" id="IPR004724">
    <property type="entry name" value="ENaC_chordates"/>
</dbReference>
<dbReference type="InterPro" id="IPR020903">
    <property type="entry name" value="ENaC_CS"/>
</dbReference>
<dbReference type="NCBIfam" id="TIGR00859">
    <property type="entry name" value="ENaC"/>
    <property type="match status" value="1"/>
</dbReference>
<dbReference type="PANTHER" id="PTHR11690:SF170">
    <property type="entry name" value="ACID-SENSING ION CHANNEL 1"/>
    <property type="match status" value="1"/>
</dbReference>
<dbReference type="PANTHER" id="PTHR11690">
    <property type="entry name" value="AMILORIDE-SENSITIVE SODIUM CHANNEL-RELATED"/>
    <property type="match status" value="1"/>
</dbReference>
<dbReference type="Pfam" id="PF00858">
    <property type="entry name" value="ASC"/>
    <property type="match status" value="1"/>
</dbReference>
<dbReference type="PRINTS" id="PR01078">
    <property type="entry name" value="AMINACHANNEL"/>
</dbReference>
<dbReference type="PROSITE" id="PS01206">
    <property type="entry name" value="ASC"/>
    <property type="match status" value="1"/>
</dbReference>